<organism>
    <name type="scientific">Saccharomyces cerevisiae (strain ATCC 204508 / S288c)</name>
    <name type="common">Baker's yeast</name>
    <dbReference type="NCBI Taxonomy" id="559292"/>
    <lineage>
        <taxon>Eukaryota</taxon>
        <taxon>Fungi</taxon>
        <taxon>Dikarya</taxon>
        <taxon>Ascomycota</taxon>
        <taxon>Saccharomycotina</taxon>
        <taxon>Saccharomycetes</taxon>
        <taxon>Saccharomycetales</taxon>
        <taxon>Saccharomycetaceae</taxon>
        <taxon>Saccharomyces</taxon>
    </lineage>
</organism>
<accession>P30822</accession>
<accession>D6VV01</accession>
<evidence type="ECO:0000255" key="1">
    <source>
        <dbReference type="PROSITE-ProRule" id="PRU00115"/>
    </source>
</evidence>
<evidence type="ECO:0000269" key="2">
    <source>
    </source>
</evidence>
<evidence type="ECO:0000269" key="3">
    <source>
    </source>
</evidence>
<evidence type="ECO:0000269" key="4">
    <source>
    </source>
</evidence>
<evidence type="ECO:0000269" key="5">
    <source>
    </source>
</evidence>
<evidence type="ECO:0000305" key="6"/>
<evidence type="ECO:0007744" key="7">
    <source>
    </source>
</evidence>
<evidence type="ECO:0007744" key="8">
    <source>
    </source>
</evidence>
<evidence type="ECO:0007829" key="9">
    <source>
        <dbReference type="PDB" id="3M1I"/>
    </source>
</evidence>
<evidence type="ECO:0007829" key="10">
    <source>
        <dbReference type="PDB" id="3VYC"/>
    </source>
</evidence>
<evidence type="ECO:0007829" key="11">
    <source>
        <dbReference type="PDB" id="3WYG"/>
    </source>
</evidence>
<evidence type="ECO:0007829" key="12">
    <source>
        <dbReference type="PDB" id="4HAT"/>
    </source>
</evidence>
<evidence type="ECO:0007829" key="13">
    <source>
        <dbReference type="PDB" id="4HB2"/>
    </source>
</evidence>
<evidence type="ECO:0007829" key="14">
    <source>
        <dbReference type="PDB" id="5YRO"/>
    </source>
</evidence>
<evidence type="ECO:0007829" key="15">
    <source>
        <dbReference type="PDB" id="5YTB"/>
    </source>
</evidence>
<evidence type="ECO:0007829" key="16">
    <source>
        <dbReference type="PDB" id="6X2O"/>
    </source>
</evidence>
<evidence type="ECO:0007829" key="17">
    <source>
        <dbReference type="PDB" id="6XJR"/>
    </source>
</evidence>
<evidence type="ECO:0007829" key="18">
    <source>
        <dbReference type="PDB" id="7CND"/>
    </source>
</evidence>
<name>XPO1_YEAST</name>
<dbReference type="EMBL" id="D13039">
    <property type="protein sequence ID" value="BAA02371.1"/>
    <property type="molecule type" value="Genomic_DNA"/>
</dbReference>
<dbReference type="EMBL" id="X87941">
    <property type="protein sequence ID" value="CAA61166.1"/>
    <property type="molecule type" value="Genomic_DNA"/>
</dbReference>
<dbReference type="EMBL" id="Z73003">
    <property type="protein sequence ID" value="CAA97246.1"/>
    <property type="molecule type" value="Genomic_DNA"/>
</dbReference>
<dbReference type="EMBL" id="BK006941">
    <property type="protein sequence ID" value="DAA08312.1"/>
    <property type="molecule type" value="Genomic_DNA"/>
</dbReference>
<dbReference type="PIR" id="S57681">
    <property type="entry name" value="S57681"/>
</dbReference>
<dbReference type="RefSeq" id="NP_011734.3">
    <property type="nucleotide sequence ID" value="NM_001181347.3"/>
</dbReference>
<dbReference type="PDB" id="3M1I">
    <property type="method" value="X-ray"/>
    <property type="resolution" value="2.00 A"/>
    <property type="chains" value="C=1-1084"/>
</dbReference>
<dbReference type="PDB" id="3VYC">
    <property type="method" value="X-ray"/>
    <property type="resolution" value="2.10 A"/>
    <property type="chains" value="A=1-1084"/>
</dbReference>
<dbReference type="PDB" id="3WYF">
    <property type="method" value="X-ray"/>
    <property type="resolution" value="2.22 A"/>
    <property type="chains" value="C/F=1-1084"/>
</dbReference>
<dbReference type="PDB" id="3WYG">
    <property type="method" value="X-ray"/>
    <property type="resolution" value="2.15 A"/>
    <property type="chains" value="C=1-1084"/>
</dbReference>
<dbReference type="PDB" id="4GMX">
    <property type="method" value="X-ray"/>
    <property type="resolution" value="2.10 A"/>
    <property type="chains" value="C=1-1058"/>
</dbReference>
<dbReference type="PDB" id="4GPT">
    <property type="method" value="X-ray"/>
    <property type="resolution" value="2.22 A"/>
    <property type="chains" value="C=1-1058"/>
</dbReference>
<dbReference type="PDB" id="4HAT">
    <property type="method" value="X-ray"/>
    <property type="resolution" value="1.78 A"/>
    <property type="chains" value="C=1-1058"/>
</dbReference>
<dbReference type="PDB" id="4HAU">
    <property type="method" value="X-ray"/>
    <property type="resolution" value="2.00 A"/>
    <property type="chains" value="C=1-1058"/>
</dbReference>
<dbReference type="PDB" id="4HAV">
    <property type="method" value="X-ray"/>
    <property type="resolution" value="2.00 A"/>
    <property type="chains" value="C=1-1058"/>
</dbReference>
<dbReference type="PDB" id="4HAW">
    <property type="method" value="X-ray"/>
    <property type="resolution" value="1.90 A"/>
    <property type="chains" value="C=1-1058"/>
</dbReference>
<dbReference type="PDB" id="4HAX">
    <property type="method" value="X-ray"/>
    <property type="resolution" value="2.28 A"/>
    <property type="chains" value="C=1-1058"/>
</dbReference>
<dbReference type="PDB" id="4HAY">
    <property type="method" value="X-ray"/>
    <property type="resolution" value="2.30 A"/>
    <property type="chains" value="C=1-1058"/>
</dbReference>
<dbReference type="PDB" id="4HAZ">
    <property type="method" value="X-ray"/>
    <property type="resolution" value="1.90 A"/>
    <property type="chains" value="C=1-1058"/>
</dbReference>
<dbReference type="PDB" id="4HB0">
    <property type="method" value="X-ray"/>
    <property type="resolution" value="2.20 A"/>
    <property type="chains" value="C=1-1058"/>
</dbReference>
<dbReference type="PDB" id="4HB2">
    <property type="method" value="X-ray"/>
    <property type="resolution" value="1.80 A"/>
    <property type="chains" value="C=1-1058"/>
</dbReference>
<dbReference type="PDB" id="4HB3">
    <property type="method" value="X-ray"/>
    <property type="resolution" value="2.80 A"/>
    <property type="chains" value="C=1-1058"/>
</dbReference>
<dbReference type="PDB" id="4HB4">
    <property type="method" value="X-ray"/>
    <property type="resolution" value="2.05 A"/>
    <property type="chains" value="C=1-1058"/>
</dbReference>
<dbReference type="PDB" id="5DH9">
    <property type="method" value="X-ray"/>
    <property type="resolution" value="2.55 A"/>
    <property type="chains" value="C=1-1058"/>
</dbReference>
<dbReference type="PDB" id="5DHA">
    <property type="method" value="X-ray"/>
    <property type="resolution" value="2.95 A"/>
    <property type="chains" value="C=1-1058"/>
</dbReference>
<dbReference type="PDB" id="5DHF">
    <property type="method" value="X-ray"/>
    <property type="resolution" value="2.29 A"/>
    <property type="chains" value="C=1-1058"/>
</dbReference>
<dbReference type="PDB" id="5DI9">
    <property type="method" value="X-ray"/>
    <property type="resolution" value="2.28 A"/>
    <property type="chains" value="C=1-1058"/>
</dbReference>
<dbReference type="PDB" id="5DIF">
    <property type="method" value="X-ray"/>
    <property type="resolution" value="2.09 A"/>
    <property type="chains" value="C=1-1058"/>
</dbReference>
<dbReference type="PDB" id="5JLJ">
    <property type="method" value="X-ray"/>
    <property type="resolution" value="2.50 A"/>
    <property type="chains" value="C=1-1058"/>
</dbReference>
<dbReference type="PDB" id="5UWH">
    <property type="method" value="X-ray"/>
    <property type="resolution" value="2.26 A"/>
    <property type="chains" value="C=1-1058"/>
</dbReference>
<dbReference type="PDB" id="5UWI">
    <property type="method" value="X-ray"/>
    <property type="resolution" value="2.14 A"/>
    <property type="chains" value="C=1-1058"/>
</dbReference>
<dbReference type="PDB" id="5UWJ">
    <property type="method" value="X-ray"/>
    <property type="resolution" value="2.22 A"/>
    <property type="chains" value="C=1-1058"/>
</dbReference>
<dbReference type="PDB" id="5UWO">
    <property type="method" value="X-ray"/>
    <property type="resolution" value="2.35 A"/>
    <property type="chains" value="C=1-1058"/>
</dbReference>
<dbReference type="PDB" id="5UWP">
    <property type="method" value="X-ray"/>
    <property type="resolution" value="2.05 A"/>
    <property type="chains" value="C=1-1058"/>
</dbReference>
<dbReference type="PDB" id="5UWQ">
    <property type="method" value="X-ray"/>
    <property type="resolution" value="2.28 A"/>
    <property type="chains" value="C=1-1058"/>
</dbReference>
<dbReference type="PDB" id="5UWR">
    <property type="method" value="X-ray"/>
    <property type="resolution" value="2.24 A"/>
    <property type="chains" value="C=1-1058"/>
</dbReference>
<dbReference type="PDB" id="5UWS">
    <property type="method" value="X-ray"/>
    <property type="resolution" value="2.40 A"/>
    <property type="chains" value="C=1-1058"/>
</dbReference>
<dbReference type="PDB" id="5UWT">
    <property type="method" value="X-ray"/>
    <property type="resolution" value="2.34 A"/>
    <property type="chains" value="C=1-1058"/>
</dbReference>
<dbReference type="PDB" id="5UWU">
    <property type="method" value="X-ray"/>
    <property type="resolution" value="2.24 A"/>
    <property type="chains" value="C=1-1058"/>
</dbReference>
<dbReference type="PDB" id="5UWW">
    <property type="method" value="X-ray"/>
    <property type="resolution" value="2.15 A"/>
    <property type="chains" value="C=1-1058"/>
</dbReference>
<dbReference type="PDB" id="5XOJ">
    <property type="method" value="X-ray"/>
    <property type="resolution" value="2.20 A"/>
    <property type="chains" value="C=1-1084"/>
</dbReference>
<dbReference type="PDB" id="5YRO">
    <property type="method" value="X-ray"/>
    <property type="resolution" value="2.40 A"/>
    <property type="chains" value="C=1-1058"/>
</dbReference>
<dbReference type="PDB" id="5YST">
    <property type="method" value="X-ray"/>
    <property type="resolution" value="2.04 A"/>
    <property type="chains" value="C=1-1052"/>
</dbReference>
<dbReference type="PDB" id="5YSU">
    <property type="method" value="X-ray"/>
    <property type="resolution" value="2.30 A"/>
    <property type="chains" value="C=1-1055"/>
</dbReference>
<dbReference type="PDB" id="5YTB">
    <property type="method" value="X-ray"/>
    <property type="resolution" value="2.30 A"/>
    <property type="chains" value="C=1-1052"/>
</dbReference>
<dbReference type="PDB" id="5ZPU">
    <property type="method" value="X-ray"/>
    <property type="resolution" value="2.60 A"/>
    <property type="chains" value="C=1-1058"/>
</dbReference>
<dbReference type="PDB" id="6A38">
    <property type="method" value="X-ray"/>
    <property type="resolution" value="2.69 A"/>
    <property type="chains" value="C=1-1058"/>
</dbReference>
<dbReference type="PDB" id="6A3A">
    <property type="method" value="X-ray"/>
    <property type="resolution" value="2.30 A"/>
    <property type="chains" value="C=1-1058"/>
</dbReference>
<dbReference type="PDB" id="6A3B">
    <property type="method" value="X-ray"/>
    <property type="resolution" value="2.51 A"/>
    <property type="chains" value="C=1-1058"/>
</dbReference>
<dbReference type="PDB" id="6A3C">
    <property type="method" value="X-ray"/>
    <property type="resolution" value="2.35 A"/>
    <property type="chains" value="C=1-1058"/>
</dbReference>
<dbReference type="PDB" id="6A3E">
    <property type="method" value="X-ray"/>
    <property type="resolution" value="2.70 A"/>
    <property type="chains" value="C=1-1058"/>
</dbReference>
<dbReference type="PDB" id="6CIT">
    <property type="method" value="X-ray"/>
    <property type="resolution" value="2.03 A"/>
    <property type="chains" value="C=1-1058"/>
</dbReference>
<dbReference type="PDB" id="6KFT">
    <property type="method" value="X-ray"/>
    <property type="resolution" value="2.51 A"/>
    <property type="chains" value="C=1-1058"/>
</dbReference>
<dbReference type="PDB" id="6LQ9">
    <property type="method" value="X-ray"/>
    <property type="resolution" value="2.50 A"/>
    <property type="chains" value="C=1-1058"/>
</dbReference>
<dbReference type="PDB" id="6M60">
    <property type="method" value="X-ray"/>
    <property type="resolution" value="2.17 A"/>
    <property type="chains" value="C=1-1058"/>
</dbReference>
<dbReference type="PDB" id="6M6X">
    <property type="method" value="X-ray"/>
    <property type="resolution" value="2.88 A"/>
    <property type="chains" value="C=1-1058"/>
</dbReference>
<dbReference type="PDB" id="6X2M">
    <property type="method" value="X-ray"/>
    <property type="resolution" value="2.35 A"/>
    <property type="chains" value="C=1-1058"/>
</dbReference>
<dbReference type="PDB" id="6X2O">
    <property type="method" value="X-ray"/>
    <property type="resolution" value="2.55 A"/>
    <property type="chains" value="C=1-1058"/>
</dbReference>
<dbReference type="PDB" id="6X2P">
    <property type="method" value="X-ray"/>
    <property type="resolution" value="2.40 A"/>
    <property type="chains" value="C=1-1058"/>
</dbReference>
<dbReference type="PDB" id="6X2R">
    <property type="method" value="X-ray"/>
    <property type="resolution" value="2.30 A"/>
    <property type="chains" value="C=1-1058"/>
</dbReference>
<dbReference type="PDB" id="6X2S">
    <property type="method" value="X-ray"/>
    <property type="resolution" value="2.50 A"/>
    <property type="chains" value="C=1-1058"/>
</dbReference>
<dbReference type="PDB" id="6X2U">
    <property type="method" value="X-ray"/>
    <property type="resolution" value="2.20 A"/>
    <property type="chains" value="C=1-1058"/>
</dbReference>
<dbReference type="PDB" id="6X2V">
    <property type="method" value="X-ray"/>
    <property type="resolution" value="2.82 A"/>
    <property type="chains" value="C=1-1058"/>
</dbReference>
<dbReference type="PDB" id="6X2W">
    <property type="method" value="X-ray"/>
    <property type="resolution" value="3.00 A"/>
    <property type="chains" value="C=1-1058"/>
</dbReference>
<dbReference type="PDB" id="6X2X">
    <property type="method" value="X-ray"/>
    <property type="resolution" value="2.46 A"/>
    <property type="chains" value="C=1-1058"/>
</dbReference>
<dbReference type="PDB" id="6X2Y">
    <property type="method" value="X-ray"/>
    <property type="resolution" value="2.30 A"/>
    <property type="chains" value="C=1-1058"/>
</dbReference>
<dbReference type="PDB" id="6XJP">
    <property type="method" value="X-ray"/>
    <property type="resolution" value="2.80 A"/>
    <property type="chains" value="C=1-1058"/>
</dbReference>
<dbReference type="PDB" id="6XJR">
    <property type="method" value="X-ray"/>
    <property type="resolution" value="1.94 A"/>
    <property type="chains" value="C=1-1058"/>
</dbReference>
<dbReference type="PDB" id="6XJS">
    <property type="method" value="X-ray"/>
    <property type="resolution" value="1.94 A"/>
    <property type="chains" value="C=1-1058"/>
</dbReference>
<dbReference type="PDB" id="6XJT">
    <property type="method" value="X-ray"/>
    <property type="resolution" value="2.41 A"/>
    <property type="chains" value="C=1-1058"/>
</dbReference>
<dbReference type="PDB" id="6XJU">
    <property type="method" value="X-ray"/>
    <property type="resolution" value="2.19 A"/>
    <property type="chains" value="C=1-1058"/>
</dbReference>
<dbReference type="PDB" id="7CND">
    <property type="method" value="X-ray"/>
    <property type="resolution" value="1.80 A"/>
    <property type="chains" value="C=1-1058"/>
</dbReference>
<dbReference type="PDB" id="7DBG">
    <property type="method" value="X-ray"/>
    <property type="resolution" value="2.06 A"/>
    <property type="chains" value="C=1-1058"/>
</dbReference>
<dbReference type="PDB" id="7L5E">
    <property type="method" value="X-ray"/>
    <property type="resolution" value="1.94 A"/>
    <property type="chains" value="C=1-1058"/>
</dbReference>
<dbReference type="PDB" id="7YPZ">
    <property type="method" value="X-ray"/>
    <property type="resolution" value="2.15 A"/>
    <property type="chains" value="C=1-1058"/>
</dbReference>
<dbReference type="PDB" id="8HQ3">
    <property type="method" value="X-ray"/>
    <property type="resolution" value="2.10 A"/>
    <property type="chains" value="C=1-1058"/>
</dbReference>
<dbReference type="PDB" id="8HQ4">
    <property type="method" value="X-ray"/>
    <property type="resolution" value="2.12 A"/>
    <property type="chains" value="C=1-1058"/>
</dbReference>
<dbReference type="PDB" id="8HQ5">
    <property type="method" value="X-ray"/>
    <property type="resolution" value="2.25 A"/>
    <property type="chains" value="C=1-1058"/>
</dbReference>
<dbReference type="PDB" id="8HQ6">
    <property type="method" value="X-ray"/>
    <property type="resolution" value="2.03 A"/>
    <property type="chains" value="C=1-1058"/>
</dbReference>
<dbReference type="PDB" id="8HUF">
    <property type="method" value="X-ray"/>
    <property type="resolution" value="2.29 A"/>
    <property type="chains" value="C=1-1058"/>
</dbReference>
<dbReference type="PDB" id="8HUG">
    <property type="method" value="X-ray"/>
    <property type="resolution" value="2.15 A"/>
    <property type="chains" value="C=1-1058"/>
</dbReference>
<dbReference type="PDB" id="8ITV">
    <property type="method" value="X-ray"/>
    <property type="resolution" value="2.30 A"/>
    <property type="chains" value="C=1-1058"/>
</dbReference>
<dbReference type="PDB" id="8QYZ">
    <property type="method" value="X-ray"/>
    <property type="resolution" value="3.00 A"/>
    <property type="chains" value="C/D/F/H=1-1084"/>
</dbReference>
<dbReference type="PDBsum" id="3M1I"/>
<dbReference type="PDBsum" id="3VYC"/>
<dbReference type="PDBsum" id="3WYF"/>
<dbReference type="PDBsum" id="3WYG"/>
<dbReference type="PDBsum" id="4GMX"/>
<dbReference type="PDBsum" id="4GPT"/>
<dbReference type="PDBsum" id="4HAT"/>
<dbReference type="PDBsum" id="4HAU"/>
<dbReference type="PDBsum" id="4HAV"/>
<dbReference type="PDBsum" id="4HAW"/>
<dbReference type="PDBsum" id="4HAX"/>
<dbReference type="PDBsum" id="4HAY"/>
<dbReference type="PDBsum" id="4HAZ"/>
<dbReference type="PDBsum" id="4HB0"/>
<dbReference type="PDBsum" id="4HB2"/>
<dbReference type="PDBsum" id="4HB3"/>
<dbReference type="PDBsum" id="4HB4"/>
<dbReference type="PDBsum" id="5DH9"/>
<dbReference type="PDBsum" id="5DHA"/>
<dbReference type="PDBsum" id="5DHF"/>
<dbReference type="PDBsum" id="5DI9"/>
<dbReference type="PDBsum" id="5DIF"/>
<dbReference type="PDBsum" id="5JLJ"/>
<dbReference type="PDBsum" id="5UWH"/>
<dbReference type="PDBsum" id="5UWI"/>
<dbReference type="PDBsum" id="5UWJ"/>
<dbReference type="PDBsum" id="5UWO"/>
<dbReference type="PDBsum" id="5UWP"/>
<dbReference type="PDBsum" id="5UWQ"/>
<dbReference type="PDBsum" id="5UWR"/>
<dbReference type="PDBsum" id="5UWS"/>
<dbReference type="PDBsum" id="5UWT"/>
<dbReference type="PDBsum" id="5UWU"/>
<dbReference type="PDBsum" id="5UWW"/>
<dbReference type="PDBsum" id="5XOJ"/>
<dbReference type="PDBsum" id="5YRO"/>
<dbReference type="PDBsum" id="5YST"/>
<dbReference type="PDBsum" id="5YSU"/>
<dbReference type="PDBsum" id="5YTB"/>
<dbReference type="PDBsum" id="5ZPU"/>
<dbReference type="PDBsum" id="6A38"/>
<dbReference type="PDBsum" id="6A3A"/>
<dbReference type="PDBsum" id="6A3B"/>
<dbReference type="PDBsum" id="6A3C"/>
<dbReference type="PDBsum" id="6A3E"/>
<dbReference type="PDBsum" id="6CIT"/>
<dbReference type="PDBsum" id="6KFT"/>
<dbReference type="PDBsum" id="6LQ9"/>
<dbReference type="PDBsum" id="6M60"/>
<dbReference type="PDBsum" id="6M6X"/>
<dbReference type="PDBsum" id="6X2M"/>
<dbReference type="PDBsum" id="6X2O"/>
<dbReference type="PDBsum" id="6X2P"/>
<dbReference type="PDBsum" id="6X2R"/>
<dbReference type="PDBsum" id="6X2S"/>
<dbReference type="PDBsum" id="6X2U"/>
<dbReference type="PDBsum" id="6X2V"/>
<dbReference type="PDBsum" id="6X2W"/>
<dbReference type="PDBsum" id="6X2X"/>
<dbReference type="PDBsum" id="6X2Y"/>
<dbReference type="PDBsum" id="6XJP"/>
<dbReference type="PDBsum" id="6XJR"/>
<dbReference type="PDBsum" id="6XJS"/>
<dbReference type="PDBsum" id="6XJT"/>
<dbReference type="PDBsum" id="6XJU"/>
<dbReference type="PDBsum" id="7CND"/>
<dbReference type="PDBsum" id="7DBG"/>
<dbReference type="PDBsum" id="7L5E"/>
<dbReference type="PDBsum" id="7YPZ"/>
<dbReference type="PDBsum" id="8HQ3"/>
<dbReference type="PDBsum" id="8HQ4"/>
<dbReference type="PDBsum" id="8HQ5"/>
<dbReference type="PDBsum" id="8HQ6"/>
<dbReference type="PDBsum" id="8HUF"/>
<dbReference type="PDBsum" id="8HUG"/>
<dbReference type="PDBsum" id="8ITV"/>
<dbReference type="PDBsum" id="8QYZ"/>
<dbReference type="EMDB" id="EMD-34641"/>
<dbReference type="SMR" id="P30822"/>
<dbReference type="BioGRID" id="33472">
    <property type="interactions" value="1021"/>
</dbReference>
<dbReference type="DIP" id="DIP-2244N"/>
<dbReference type="FunCoup" id="P30822">
    <property type="interactions" value="1775"/>
</dbReference>
<dbReference type="IntAct" id="P30822">
    <property type="interactions" value="769"/>
</dbReference>
<dbReference type="MINT" id="P30822"/>
<dbReference type="STRING" id="4932.YGR218W"/>
<dbReference type="ChEMBL" id="CHEMBL4630873"/>
<dbReference type="MoonDB" id="P30822">
    <property type="type" value="Predicted"/>
</dbReference>
<dbReference type="iPTMnet" id="P30822"/>
<dbReference type="PaxDb" id="4932-YGR218W"/>
<dbReference type="PeptideAtlas" id="P30822"/>
<dbReference type="EnsemblFungi" id="YGR218W_mRNA">
    <property type="protein sequence ID" value="YGR218W"/>
    <property type="gene ID" value="YGR218W"/>
</dbReference>
<dbReference type="GeneID" id="853133"/>
<dbReference type="KEGG" id="sce:YGR218W"/>
<dbReference type="AGR" id="SGD:S000003450"/>
<dbReference type="SGD" id="S000003450">
    <property type="gene designation" value="CRM1"/>
</dbReference>
<dbReference type="VEuPathDB" id="FungiDB:YGR218W"/>
<dbReference type="eggNOG" id="KOG2020">
    <property type="taxonomic scope" value="Eukaryota"/>
</dbReference>
<dbReference type="GeneTree" id="ENSGT00940000153408"/>
<dbReference type="HOGENOM" id="CLU_011906_0_0_1"/>
<dbReference type="InParanoid" id="P30822"/>
<dbReference type="OMA" id="WAFKHNN"/>
<dbReference type="OrthoDB" id="27218at2759"/>
<dbReference type="BioCyc" id="YEAST:G3O-30900-MONOMER"/>
<dbReference type="Reactome" id="R-SCE-5687128">
    <property type="pathway name" value="MAPK6/MAPK4 signaling"/>
</dbReference>
<dbReference type="Reactome" id="R-SCE-9856649">
    <property type="pathway name" value="Transcriptional and post-translational regulation of MITF-M expression and activity"/>
</dbReference>
<dbReference type="BioGRID-ORCS" id="853133">
    <property type="hits" value="2 hits in 10 CRISPR screens"/>
</dbReference>
<dbReference type="CD-CODE" id="876000F7">
    <property type="entry name" value="Centrosome"/>
</dbReference>
<dbReference type="EvolutionaryTrace" id="P30822"/>
<dbReference type="PRO" id="PR:P30822"/>
<dbReference type="Proteomes" id="UP000002311">
    <property type="component" value="Chromosome VII"/>
</dbReference>
<dbReference type="RNAct" id="P30822">
    <property type="molecule type" value="protein"/>
</dbReference>
<dbReference type="GO" id="GO:0005737">
    <property type="term" value="C:cytoplasm"/>
    <property type="evidence" value="ECO:0000318"/>
    <property type="project" value="GO_Central"/>
</dbReference>
<dbReference type="GO" id="GO:0000776">
    <property type="term" value="C:kinetochore"/>
    <property type="evidence" value="ECO:0000314"/>
    <property type="project" value="SGD"/>
</dbReference>
<dbReference type="GO" id="GO:0005634">
    <property type="term" value="C:nucleus"/>
    <property type="evidence" value="ECO:0000314"/>
    <property type="project" value="SGD"/>
</dbReference>
<dbReference type="GO" id="GO:0048471">
    <property type="term" value="C:perinuclear region of cytoplasm"/>
    <property type="evidence" value="ECO:0007669"/>
    <property type="project" value="UniProtKB-SubCell"/>
</dbReference>
<dbReference type="GO" id="GO:0005816">
    <property type="term" value="C:spindle pole body"/>
    <property type="evidence" value="ECO:0000314"/>
    <property type="project" value="SGD"/>
</dbReference>
<dbReference type="GO" id="GO:0005049">
    <property type="term" value="F:nuclear export signal receptor activity"/>
    <property type="evidence" value="ECO:0000318"/>
    <property type="project" value="GO_Central"/>
</dbReference>
<dbReference type="GO" id="GO:0061608">
    <property type="term" value="F:nuclear import signal receptor activity"/>
    <property type="evidence" value="ECO:0000314"/>
    <property type="project" value="SGD"/>
</dbReference>
<dbReference type="GO" id="GO:0031267">
    <property type="term" value="F:small GTPase binding"/>
    <property type="evidence" value="ECO:0007669"/>
    <property type="project" value="InterPro"/>
</dbReference>
<dbReference type="GO" id="GO:0030619">
    <property type="term" value="F:U1 snRNA binding"/>
    <property type="evidence" value="ECO:0000314"/>
    <property type="project" value="SGD"/>
</dbReference>
<dbReference type="GO" id="GO:0030620">
    <property type="term" value="F:U2 snRNA binding"/>
    <property type="evidence" value="ECO:0000314"/>
    <property type="project" value="SGD"/>
</dbReference>
<dbReference type="GO" id="GO:0030621">
    <property type="term" value="F:U4 snRNA binding"/>
    <property type="evidence" value="ECO:0000314"/>
    <property type="project" value="SGD"/>
</dbReference>
<dbReference type="GO" id="GO:0030623">
    <property type="term" value="F:U5 snRNA binding"/>
    <property type="evidence" value="ECO:0000314"/>
    <property type="project" value="SGD"/>
</dbReference>
<dbReference type="GO" id="GO:0017070">
    <property type="term" value="F:U6 snRNA binding"/>
    <property type="evidence" value="ECO:0000314"/>
    <property type="project" value="SGD"/>
</dbReference>
<dbReference type="GO" id="GO:0006406">
    <property type="term" value="P:mRNA export from nucleus"/>
    <property type="evidence" value="ECO:0000315"/>
    <property type="project" value="SGD"/>
</dbReference>
<dbReference type="GO" id="GO:0051168">
    <property type="term" value="P:nuclear export"/>
    <property type="evidence" value="ECO:0000315"/>
    <property type="project" value="SGD"/>
</dbReference>
<dbReference type="GO" id="GO:0006611">
    <property type="term" value="P:protein export from nucleus"/>
    <property type="evidence" value="ECO:0000315"/>
    <property type="project" value="SGD"/>
</dbReference>
<dbReference type="GO" id="GO:0034501">
    <property type="term" value="P:protein localization to kinetochore"/>
    <property type="evidence" value="ECO:0000316"/>
    <property type="project" value="SGD"/>
</dbReference>
<dbReference type="GO" id="GO:0000055">
    <property type="term" value="P:ribosomal large subunit export from nucleus"/>
    <property type="evidence" value="ECO:0000315"/>
    <property type="project" value="SGD"/>
</dbReference>
<dbReference type="GO" id="GO:0000056">
    <property type="term" value="P:ribosomal small subunit export from nucleus"/>
    <property type="evidence" value="ECO:0000318"/>
    <property type="project" value="GO_Central"/>
</dbReference>
<dbReference type="GO" id="GO:0006409">
    <property type="term" value="P:tRNA export from nucleus"/>
    <property type="evidence" value="ECO:0000314"/>
    <property type="project" value="SGD"/>
</dbReference>
<dbReference type="GO" id="GO:0071528">
    <property type="term" value="P:tRNA re-export from nucleus"/>
    <property type="evidence" value="ECO:0000315"/>
    <property type="project" value="SGD"/>
</dbReference>
<dbReference type="FunFam" id="1.25.10.10:FF:000490">
    <property type="entry name" value="CRM1p Major karyopherin"/>
    <property type="match status" value="1"/>
</dbReference>
<dbReference type="Gene3D" id="1.25.10.10">
    <property type="entry name" value="Leucine-rich Repeat Variant"/>
    <property type="match status" value="2"/>
</dbReference>
<dbReference type="IDEAL" id="IID50169"/>
<dbReference type="InterPro" id="IPR011989">
    <property type="entry name" value="ARM-like"/>
</dbReference>
<dbReference type="InterPro" id="IPR016024">
    <property type="entry name" value="ARM-type_fold"/>
</dbReference>
<dbReference type="InterPro" id="IPR041123">
    <property type="entry name" value="CRM1_repeat"/>
</dbReference>
<dbReference type="InterPro" id="IPR041235">
    <property type="entry name" value="Exp1_repeat_2"/>
</dbReference>
<dbReference type="InterPro" id="IPR013598">
    <property type="entry name" value="Exportin-1/Importin-b-like"/>
</dbReference>
<dbReference type="InterPro" id="IPR001494">
    <property type="entry name" value="Importin-beta_N"/>
</dbReference>
<dbReference type="InterPro" id="IPR045065">
    <property type="entry name" value="XPO1/5"/>
</dbReference>
<dbReference type="InterPro" id="IPR014877">
    <property type="entry name" value="XPO1_C_dom"/>
</dbReference>
<dbReference type="InterPro" id="IPR040485">
    <property type="entry name" value="XPO1_repeat_3"/>
</dbReference>
<dbReference type="PANTHER" id="PTHR11223">
    <property type="entry name" value="EXPORTIN 1/5"/>
    <property type="match status" value="1"/>
</dbReference>
<dbReference type="PANTHER" id="PTHR11223:SF2">
    <property type="entry name" value="EXPORTIN-1"/>
    <property type="match status" value="1"/>
</dbReference>
<dbReference type="Pfam" id="PF08767">
    <property type="entry name" value="CRM1_C"/>
    <property type="match status" value="1"/>
</dbReference>
<dbReference type="Pfam" id="PF18777">
    <property type="entry name" value="CRM1_repeat"/>
    <property type="match status" value="1"/>
</dbReference>
<dbReference type="Pfam" id="PF18784">
    <property type="entry name" value="CRM1_repeat_2"/>
    <property type="match status" value="1"/>
</dbReference>
<dbReference type="Pfam" id="PF18787">
    <property type="entry name" value="CRM1_repeat_3"/>
    <property type="match status" value="1"/>
</dbReference>
<dbReference type="Pfam" id="PF03810">
    <property type="entry name" value="IBN_N"/>
    <property type="match status" value="1"/>
</dbReference>
<dbReference type="Pfam" id="PF08389">
    <property type="entry name" value="Xpo1"/>
    <property type="match status" value="1"/>
</dbReference>
<dbReference type="SMART" id="SM01102">
    <property type="entry name" value="CRM1_C"/>
    <property type="match status" value="1"/>
</dbReference>
<dbReference type="SMART" id="SM00913">
    <property type="entry name" value="IBN_N"/>
    <property type="match status" value="1"/>
</dbReference>
<dbReference type="SUPFAM" id="SSF48371">
    <property type="entry name" value="ARM repeat"/>
    <property type="match status" value="1"/>
</dbReference>
<dbReference type="PROSITE" id="PS50166">
    <property type="entry name" value="IMPORTIN_B_NT"/>
    <property type="match status" value="1"/>
</dbReference>
<keyword id="KW-0002">3D-structure</keyword>
<keyword id="KW-0963">Cytoplasm</keyword>
<keyword id="KW-0539">Nucleus</keyword>
<keyword id="KW-0597">Phosphoprotein</keyword>
<keyword id="KW-0653">Protein transport</keyword>
<keyword id="KW-1185">Reference proteome</keyword>
<keyword id="KW-0813">Transport</keyword>
<proteinExistence type="evidence at protein level"/>
<sequence length="1084" mass="124104">MEGILDFSNDLDIALLDQVVSTFYQGSGVQQKQAQEILTKFQDNPDAWQKADQILQFSTNPQSKFIALSILDKLITRKWKLLPNDHRIGIRNFVVGMIISMCQDDEVFKTQKNLINKSDLTLVQILKQEWPQNWPEFIPELIGSSSSSVNVCENNMIVLKLLSEEVFDFSAEQMTQAKALHLKNSMSKEFEQIFKLCFQVLEQGSSSSLIVATLESLLRYLHWIPYRYIYETNILELLSTKFMTSPDTRAITLKCLTEVSNLKIPQDNDLIKRQTVLFFQNTLQQIATSVMPVTADLKATYANANGNDQSFLQDLAMFLTTYLARNRALLESDESLRELLLNAHQYLIQLSKIEERELFKTTLDYWHNLVADLFYEVQRLPATEMSPLIQLSVGSQAISTGSGALNPEYMKRFPLKKHIYEEICSQLRLVIIENMVRPEEVLVVENDEGEIVREFVKESDTIQLYKSEREVLVYLTHLNVIDTEEIMISKLARQIDGSEWSWHNINTLSWAIGSISGTMSEDTEKRFVVTVIKDLLDLTVKKRGKDNKAVVASDIMYVVGQYPRFLKAHWNFLRTVILKLFEFMHETHEGVQDMACDTFIKIVQKCKYHFVIQQPRESEPFIQTIIRDIQKTTADLQPQQVHTFYKACGIIISEERSVAERNRLLSDLMQLPNMAWDTIVEQSTANPTLLLDSETVKIIANIIKTNVAVCTSMGADFYPQLGHIYYNMLQLYRAVSSMISAQVAAEGLIATKTPKVRGLRTIKKEILKLVETYISKARNLDDVVKVLVEPLLNAVLEDYMNNVPDARDAEVLNCMTTVVEKVGHMIPQGVILILQSVFECTLDMINKDFTEYPEHRVEFYKLLKVINEKSFAAFLELPPAAFKLFVDAICWAFKHNNRDVEVNGLQIALDLVKNIERMGNVPFANEFHKNYFFIFVSETFFVLTDSDHKSGFSKQALLLMKLISLVYDNKISVPLYQEAEVPQGTSNQVYLSQYLANMLSNAFPHLTSEQIASFLSALTKQYKDLVVFKGTLRDFLVQIKEVGGDPTDYLFAEDKENALMEQNRLEREKAAKIGGLLKPSELDD</sequence>
<feature type="chain" id="PRO_0000204710" description="Exportin-1">
    <location>
        <begin position="1"/>
        <end position="1084"/>
    </location>
</feature>
<feature type="domain" description="Importin N-terminal" evidence="1">
    <location>
        <begin position="34"/>
        <end position="100"/>
    </location>
</feature>
<feature type="modified residue" description="Phosphoserine" evidence="7 8">
    <location>
        <position position="1080"/>
    </location>
</feature>
<feature type="helix" evidence="12">
    <location>
        <begin position="1"/>
        <end position="5"/>
    </location>
</feature>
<feature type="strand" evidence="17">
    <location>
        <begin position="7"/>
        <end position="9"/>
    </location>
</feature>
<feature type="helix" evidence="12">
    <location>
        <begin position="13"/>
        <end position="25"/>
    </location>
</feature>
<feature type="helix" evidence="12">
    <location>
        <begin position="28"/>
        <end position="43"/>
    </location>
</feature>
<feature type="helix" evidence="12">
    <location>
        <begin position="47"/>
        <end position="50"/>
    </location>
</feature>
<feature type="helix" evidence="12">
    <location>
        <begin position="51"/>
        <end position="57"/>
    </location>
</feature>
<feature type="helix" evidence="12">
    <location>
        <begin position="61"/>
        <end position="78"/>
    </location>
</feature>
<feature type="helix" evidence="12">
    <location>
        <begin position="79"/>
        <end position="81"/>
    </location>
</feature>
<feature type="helix" evidence="12">
    <location>
        <begin position="84"/>
        <end position="103"/>
    </location>
</feature>
<feature type="helix" evidence="12">
    <location>
        <begin position="105"/>
        <end position="110"/>
    </location>
</feature>
<feature type="helix" evidence="12">
    <location>
        <begin position="112"/>
        <end position="129"/>
    </location>
</feature>
<feature type="turn" evidence="12">
    <location>
        <begin position="130"/>
        <end position="133"/>
    </location>
</feature>
<feature type="helix" evidence="12">
    <location>
        <begin position="137"/>
        <end position="144"/>
    </location>
</feature>
<feature type="turn" evidence="12">
    <location>
        <begin position="145"/>
        <end position="147"/>
    </location>
</feature>
<feature type="helix" evidence="12">
    <location>
        <begin position="149"/>
        <end position="167"/>
    </location>
</feature>
<feature type="turn" evidence="12">
    <location>
        <begin position="171"/>
        <end position="173"/>
    </location>
</feature>
<feature type="helix" evidence="12">
    <location>
        <begin position="176"/>
        <end position="203"/>
    </location>
</feature>
<feature type="strand" evidence="13">
    <location>
        <begin position="205"/>
        <end position="207"/>
    </location>
</feature>
<feature type="helix" evidence="12">
    <location>
        <begin position="208"/>
        <end position="220"/>
    </location>
</feature>
<feature type="turn" evidence="12">
    <location>
        <begin position="221"/>
        <end position="223"/>
    </location>
</feature>
<feature type="helix" evidence="12">
    <location>
        <begin position="227"/>
        <end position="230"/>
    </location>
</feature>
<feature type="strand" evidence="12">
    <location>
        <begin position="231"/>
        <end position="233"/>
    </location>
</feature>
<feature type="helix" evidence="12">
    <location>
        <begin position="234"/>
        <end position="239"/>
    </location>
</feature>
<feature type="helix" evidence="12">
    <location>
        <begin position="241"/>
        <end position="244"/>
    </location>
</feature>
<feature type="helix" evidence="12">
    <location>
        <begin position="246"/>
        <end position="260"/>
    </location>
</feature>
<feature type="helix" evidence="12">
    <location>
        <begin position="269"/>
        <end position="289"/>
    </location>
</feature>
<feature type="helix" evidence="12">
    <location>
        <begin position="297"/>
        <end position="303"/>
    </location>
</feature>
<feature type="helix" evidence="12">
    <location>
        <begin position="308"/>
        <end position="326"/>
    </location>
</feature>
<feature type="helix" evidence="12">
    <location>
        <begin position="327"/>
        <end position="330"/>
    </location>
</feature>
<feature type="helix" evidence="12">
    <location>
        <begin position="334"/>
        <end position="336"/>
    </location>
</feature>
<feature type="helix" evidence="12">
    <location>
        <begin position="337"/>
        <end position="350"/>
    </location>
</feature>
<feature type="helix" evidence="12">
    <location>
        <begin position="356"/>
        <end position="373"/>
    </location>
</feature>
<feature type="turn" evidence="12">
    <location>
        <begin position="414"/>
        <end position="416"/>
    </location>
</feature>
<feature type="helix" evidence="12">
    <location>
        <begin position="417"/>
        <end position="420"/>
    </location>
</feature>
<feature type="helix" evidence="12">
    <location>
        <begin position="421"/>
        <end position="433"/>
    </location>
</feature>
<feature type="strand" evidence="12">
    <location>
        <begin position="443"/>
        <end position="445"/>
    </location>
</feature>
<feature type="strand" evidence="15">
    <location>
        <begin position="447"/>
        <end position="449"/>
    </location>
</feature>
<feature type="strand" evidence="12">
    <location>
        <begin position="451"/>
        <end position="453"/>
    </location>
</feature>
<feature type="helix" evidence="12">
    <location>
        <begin position="459"/>
        <end position="461"/>
    </location>
</feature>
<feature type="helix" evidence="12">
    <location>
        <begin position="462"/>
        <end position="478"/>
    </location>
</feature>
<feature type="helix" evidence="12">
    <location>
        <begin position="480"/>
        <end position="495"/>
    </location>
</feature>
<feature type="strand" evidence="18">
    <location>
        <begin position="497"/>
        <end position="499"/>
    </location>
</feature>
<feature type="helix" evidence="12">
    <location>
        <begin position="502"/>
        <end position="514"/>
    </location>
</feature>
<feature type="turn" evidence="12">
    <location>
        <begin position="515"/>
        <end position="517"/>
    </location>
</feature>
<feature type="helix" evidence="12">
    <location>
        <begin position="521"/>
        <end position="541"/>
    </location>
</feature>
<feature type="helix" evidence="12">
    <location>
        <begin position="545"/>
        <end position="560"/>
    </location>
</feature>
<feature type="helix" evidence="12">
    <location>
        <begin position="563"/>
        <end position="568"/>
    </location>
</feature>
<feature type="helix" evidence="12">
    <location>
        <begin position="570"/>
        <end position="583"/>
    </location>
</feature>
<feature type="helix" evidence="12">
    <location>
        <begin position="589"/>
        <end position="606"/>
    </location>
</feature>
<feature type="helix" evidence="12">
    <location>
        <begin position="608"/>
        <end position="611"/>
    </location>
</feature>
<feature type="strand" evidence="14">
    <location>
        <begin position="618"/>
        <end position="620"/>
    </location>
</feature>
<feature type="helix" evidence="12">
    <location>
        <begin position="621"/>
        <end position="627"/>
    </location>
</feature>
<feature type="helix" evidence="12">
    <location>
        <begin position="629"/>
        <end position="633"/>
    </location>
</feature>
<feature type="strand" evidence="16">
    <location>
        <begin position="634"/>
        <end position="636"/>
    </location>
</feature>
<feature type="helix" evidence="12">
    <location>
        <begin position="638"/>
        <end position="652"/>
    </location>
</feature>
<feature type="helix" evidence="12">
    <location>
        <begin position="658"/>
        <end position="668"/>
    </location>
</feature>
<feature type="helix" evidence="12">
    <location>
        <begin position="670"/>
        <end position="685"/>
    </location>
</feature>
<feature type="helix" evidence="12">
    <location>
        <begin position="689"/>
        <end position="691"/>
    </location>
</feature>
<feature type="helix" evidence="12">
    <location>
        <begin position="693"/>
        <end position="713"/>
    </location>
</feature>
<feature type="helix" evidence="12">
    <location>
        <begin position="714"/>
        <end position="717"/>
    </location>
</feature>
<feature type="helix" evidence="12">
    <location>
        <begin position="718"/>
        <end position="746"/>
    </location>
</feature>
<feature type="helix" evidence="12">
    <location>
        <begin position="748"/>
        <end position="752"/>
    </location>
</feature>
<feature type="helix" evidence="12">
    <location>
        <begin position="754"/>
        <end position="776"/>
    </location>
</feature>
<feature type="helix" evidence="12">
    <location>
        <begin position="780"/>
        <end position="786"/>
    </location>
</feature>
<feature type="helix" evidence="12">
    <location>
        <begin position="788"/>
        <end position="801"/>
    </location>
</feature>
<feature type="helix" evidence="12">
    <location>
        <begin position="804"/>
        <end position="806"/>
    </location>
</feature>
<feature type="helix" evidence="12">
    <location>
        <begin position="809"/>
        <end position="822"/>
    </location>
</feature>
<feature type="helix" evidence="12">
    <location>
        <begin position="823"/>
        <end position="825"/>
    </location>
</feature>
<feature type="helix" evidence="12">
    <location>
        <begin position="827"/>
        <end position="845"/>
    </location>
</feature>
<feature type="strand" evidence="12">
    <location>
        <begin position="849"/>
        <end position="852"/>
    </location>
</feature>
<feature type="helix" evidence="12">
    <location>
        <begin position="853"/>
        <end position="869"/>
    </location>
</feature>
<feature type="helix" evidence="12">
    <location>
        <begin position="872"/>
        <end position="875"/>
    </location>
</feature>
<feature type="helix" evidence="12">
    <location>
        <begin position="879"/>
        <end position="893"/>
    </location>
</feature>
<feature type="helix" evidence="12">
    <location>
        <begin position="898"/>
        <end position="918"/>
    </location>
</feature>
<feature type="helix" evidence="12">
    <location>
        <begin position="922"/>
        <end position="944"/>
    </location>
</feature>
<feature type="strand" evidence="12">
    <location>
        <begin position="945"/>
        <end position="947"/>
    </location>
</feature>
<feature type="helix" evidence="12">
    <location>
        <begin position="949"/>
        <end position="951"/>
    </location>
</feature>
<feature type="helix" evidence="12">
    <location>
        <begin position="952"/>
        <end position="967"/>
    </location>
</feature>
<feature type="turn" evidence="13">
    <location>
        <begin position="978"/>
        <end position="980"/>
    </location>
</feature>
<feature type="helix" evidence="12">
    <location>
        <begin position="987"/>
        <end position="1002"/>
    </location>
</feature>
<feature type="helix" evidence="12">
    <location>
        <begin position="1008"/>
        <end position="1020"/>
    </location>
</feature>
<feature type="turn" evidence="12">
    <location>
        <begin position="1021"/>
        <end position="1023"/>
    </location>
</feature>
<feature type="helix" evidence="12">
    <location>
        <begin position="1025"/>
        <end position="1038"/>
    </location>
</feature>
<feature type="strand" evidence="12">
    <location>
        <begin position="1041"/>
        <end position="1043"/>
    </location>
</feature>
<feature type="helix" evidence="12">
    <location>
        <begin position="1046"/>
        <end position="1050"/>
    </location>
</feature>
<feature type="helix" evidence="11">
    <location>
        <begin position="1051"/>
        <end position="1054"/>
    </location>
</feature>
<feature type="turn" evidence="9">
    <location>
        <begin position="1055"/>
        <end position="1057"/>
    </location>
</feature>
<feature type="helix" evidence="10">
    <location>
        <begin position="1079"/>
        <end position="1081"/>
    </location>
</feature>
<gene>
    <name type="primary">CRM1</name>
    <name type="synonym">KAP124</name>
    <name type="synonym">XPO1</name>
    <name type="ordered locus">YGR218W</name>
    <name type="ORF">G8514</name>
</gene>
<protein>
    <recommendedName>
        <fullName>Exportin-1</fullName>
    </recommendedName>
    <alternativeName>
        <fullName>Chromosome region maintenance protein 1</fullName>
    </alternativeName>
    <alternativeName>
        <fullName>Karyopherin-124</fullName>
    </alternativeName>
</protein>
<reference key="1">
    <citation type="journal article" date="1992" name="Mol. Cell. Biol.">
        <title>Fission yeast pap1-dependent transcription is negatively regulated by an essential nuclear protein, crm1.</title>
        <authorList>
            <person name="Toda T."/>
            <person name="Shimanuki M."/>
            <person name="Saka Y."/>
            <person name="Yamano H."/>
            <person name="Adachi Y."/>
            <person name="Shirakawa M."/>
            <person name="Kyogoku Y."/>
            <person name="Yanagida M."/>
        </authorList>
    </citation>
    <scope>NUCLEOTIDE SEQUENCE [GENOMIC DNA]</scope>
</reference>
<reference key="2">
    <citation type="journal article" date="1996" name="Yeast">
        <title>Sequence analysis of the 43 kb CRM1-YLM9-PET54-DIE2-SMI1-PHO81-YHB4-PFK1 region from the right arm of Saccharomyces cerevisiae chromosome VII.</title>
        <authorList>
            <person name="van der Aart Q.J.M."/>
            <person name="Kleine K."/>
            <person name="Steensma H.Y."/>
        </authorList>
    </citation>
    <scope>NUCLEOTIDE SEQUENCE [GENOMIC DNA]</scope>
    <source>
        <strain>ATCC 204508 / S288c</strain>
    </source>
</reference>
<reference key="3">
    <citation type="journal article" date="1997" name="Nature">
        <title>The nucleotide sequence of Saccharomyces cerevisiae chromosome VII.</title>
        <authorList>
            <person name="Tettelin H."/>
            <person name="Agostoni-Carbone M.L."/>
            <person name="Albermann K."/>
            <person name="Albers M."/>
            <person name="Arroyo J."/>
            <person name="Backes U."/>
            <person name="Barreiros T."/>
            <person name="Bertani I."/>
            <person name="Bjourson A.J."/>
            <person name="Brueckner M."/>
            <person name="Bruschi C.V."/>
            <person name="Carignani G."/>
            <person name="Castagnoli L."/>
            <person name="Cerdan E."/>
            <person name="Clemente M.L."/>
            <person name="Coblenz A."/>
            <person name="Coglievina M."/>
            <person name="Coissac E."/>
            <person name="Defoor E."/>
            <person name="Del Bino S."/>
            <person name="Delius H."/>
            <person name="Delneri D."/>
            <person name="de Wergifosse P."/>
            <person name="Dujon B."/>
            <person name="Durand P."/>
            <person name="Entian K.-D."/>
            <person name="Eraso P."/>
            <person name="Escribano V."/>
            <person name="Fabiani L."/>
            <person name="Fartmann B."/>
            <person name="Feroli F."/>
            <person name="Feuermann M."/>
            <person name="Frontali L."/>
            <person name="Garcia-Gonzalez M."/>
            <person name="Garcia-Saez M.I."/>
            <person name="Goffeau A."/>
            <person name="Guerreiro P."/>
            <person name="Hani J."/>
            <person name="Hansen M."/>
            <person name="Hebling U."/>
            <person name="Hernandez K."/>
            <person name="Heumann K."/>
            <person name="Hilger F."/>
            <person name="Hofmann B."/>
            <person name="Indge K.J."/>
            <person name="James C.M."/>
            <person name="Klima R."/>
            <person name="Koetter P."/>
            <person name="Kramer B."/>
            <person name="Kramer W."/>
            <person name="Lauquin G."/>
            <person name="Leuther H."/>
            <person name="Louis E.J."/>
            <person name="Maillier E."/>
            <person name="Marconi A."/>
            <person name="Martegani E."/>
            <person name="Mazon M.J."/>
            <person name="Mazzoni C."/>
            <person name="McReynolds A.D.K."/>
            <person name="Melchioretto P."/>
            <person name="Mewes H.-W."/>
            <person name="Minenkova O."/>
            <person name="Mueller-Auer S."/>
            <person name="Nawrocki A."/>
            <person name="Netter P."/>
            <person name="Neu R."/>
            <person name="Nombela C."/>
            <person name="Oliver S.G."/>
            <person name="Panzeri L."/>
            <person name="Paoluzi S."/>
            <person name="Plevani P."/>
            <person name="Portetelle D."/>
            <person name="Portillo F."/>
            <person name="Potier S."/>
            <person name="Purnelle B."/>
            <person name="Rieger M."/>
            <person name="Riles L."/>
            <person name="Rinaldi T."/>
            <person name="Robben J."/>
            <person name="Rodrigues-Pousada C."/>
            <person name="Rodriguez-Belmonte E."/>
            <person name="Rodriguez-Torres A.M."/>
            <person name="Rose M."/>
            <person name="Ruzzi M."/>
            <person name="Saliola M."/>
            <person name="Sanchez-Perez M."/>
            <person name="Schaefer B."/>
            <person name="Schaefer M."/>
            <person name="Scharfe M."/>
            <person name="Schmidheini T."/>
            <person name="Schreer A."/>
            <person name="Skala J."/>
            <person name="Souciet J.-L."/>
            <person name="Steensma H.Y."/>
            <person name="Talla E."/>
            <person name="Thierry A."/>
            <person name="Vandenbol M."/>
            <person name="van der Aart Q.J.M."/>
            <person name="Van Dyck L."/>
            <person name="Vanoni M."/>
            <person name="Verhasselt P."/>
            <person name="Voet M."/>
            <person name="Volckaert G."/>
            <person name="Wambutt R."/>
            <person name="Watson M.D."/>
            <person name="Weber N."/>
            <person name="Wedler E."/>
            <person name="Wedler H."/>
            <person name="Wipfli P."/>
            <person name="Wolf K."/>
            <person name="Wright L.F."/>
            <person name="Zaccaria P."/>
            <person name="Zimmermann M."/>
            <person name="Zollner A."/>
            <person name="Kleine K."/>
        </authorList>
    </citation>
    <scope>NUCLEOTIDE SEQUENCE [LARGE SCALE GENOMIC DNA]</scope>
    <source>
        <strain>ATCC 204508 / S288c</strain>
    </source>
</reference>
<reference key="4">
    <citation type="journal article" date="2014" name="G3 (Bethesda)">
        <title>The reference genome sequence of Saccharomyces cerevisiae: Then and now.</title>
        <authorList>
            <person name="Engel S.R."/>
            <person name="Dietrich F.S."/>
            <person name="Fisk D.G."/>
            <person name="Binkley G."/>
            <person name="Balakrishnan R."/>
            <person name="Costanzo M.C."/>
            <person name="Dwight S.S."/>
            <person name="Hitz B.C."/>
            <person name="Karra K."/>
            <person name="Nash R.S."/>
            <person name="Weng S."/>
            <person name="Wong E.D."/>
            <person name="Lloyd P."/>
            <person name="Skrzypek M.S."/>
            <person name="Miyasato S.R."/>
            <person name="Simison M."/>
            <person name="Cherry J.M."/>
        </authorList>
    </citation>
    <scope>GENOME REANNOTATION</scope>
    <source>
        <strain>ATCC 204508 / S288c</strain>
    </source>
</reference>
<reference key="5">
    <citation type="journal article" date="1997" name="Cell">
        <title>Exportin 1 (Crm1p) is an essential nuclear export factor.</title>
        <authorList>
            <person name="Stade K."/>
            <person name="Ford C.S."/>
            <person name="Guthrie C."/>
            <person name="Weis K."/>
        </authorList>
    </citation>
    <scope>CHARACTERIZATION</scope>
</reference>
<reference key="6">
    <citation type="journal article" date="2003" name="Nature">
        <title>Global analysis of protein localization in budding yeast.</title>
        <authorList>
            <person name="Huh W.-K."/>
            <person name="Falvo J.V."/>
            <person name="Gerke L.C."/>
            <person name="Carroll A.S."/>
            <person name="Howson R.W."/>
            <person name="Weissman J.S."/>
            <person name="O'Shea E.K."/>
        </authorList>
    </citation>
    <scope>SUBCELLULAR LOCATION [LARGE SCALE ANALYSIS]</scope>
</reference>
<reference key="7">
    <citation type="journal article" date="2003" name="Nature">
        <title>Global analysis of protein expression in yeast.</title>
        <authorList>
            <person name="Ghaemmaghami S."/>
            <person name="Huh W.-K."/>
            <person name="Bower K."/>
            <person name="Howson R.W."/>
            <person name="Belle A."/>
            <person name="Dephoure N."/>
            <person name="O'Shea E.K."/>
            <person name="Weissman J.S."/>
        </authorList>
    </citation>
    <scope>LEVEL OF PROTEIN EXPRESSION [LARGE SCALE ANALYSIS]</scope>
</reference>
<reference key="8">
    <citation type="journal article" date="2005" name="RNA">
        <title>Yeast poly(A)-binding protein Pab1 shuttles between the nucleus and the cytoplasm and functions in mRNA export.</title>
        <authorList>
            <person name="Brune C."/>
            <person name="Munchel S.E."/>
            <person name="Fischer N."/>
            <person name="Podtelejnikov A.V."/>
            <person name="Weis K."/>
        </authorList>
    </citation>
    <scope>INTERACTION WITH PAB1</scope>
</reference>
<reference key="9">
    <citation type="journal article" date="2004" name="Genetics">
        <title>The yeast splicing factor Prp40p contains functional leucine-rich nuclear export signals that are essential for splicing.</title>
        <authorList>
            <person name="Murphy M.W."/>
            <person name="Olson B.L."/>
            <person name="Siliciano P.G."/>
        </authorList>
    </citation>
    <scope>INTERACTION WITH PRP40</scope>
</reference>
<reference key="10">
    <citation type="journal article" date="2008" name="Mol. Cell. Proteomics">
        <title>A multidimensional chromatography technology for in-depth phosphoproteome analysis.</title>
        <authorList>
            <person name="Albuquerque C.P."/>
            <person name="Smolka M.B."/>
            <person name="Payne S.H."/>
            <person name="Bafna V."/>
            <person name="Eng J."/>
            <person name="Zhou H."/>
        </authorList>
    </citation>
    <scope>PHOSPHORYLATION [LARGE SCALE ANALYSIS] AT SER-1080</scope>
    <scope>IDENTIFICATION BY MASS SPECTROMETRY [LARGE SCALE ANALYSIS]</scope>
</reference>
<reference key="11">
    <citation type="journal article" date="2009" name="Science">
        <title>Global analysis of Cdk1 substrate phosphorylation sites provides insights into evolution.</title>
        <authorList>
            <person name="Holt L.J."/>
            <person name="Tuch B.B."/>
            <person name="Villen J."/>
            <person name="Johnson A.D."/>
            <person name="Gygi S.P."/>
            <person name="Morgan D.O."/>
        </authorList>
    </citation>
    <scope>PHOSPHORYLATION [LARGE SCALE ANALYSIS] AT SER-1080</scope>
    <scope>IDENTIFICATION BY MASS SPECTROMETRY [LARGE SCALE ANALYSIS]</scope>
</reference>
<comment type="function">
    <text>Receptor for the leucine-rich nuclear export signal (NES).</text>
</comment>
<comment type="subunit">
    <text evidence="4 5">Interacts with GSP1/GSP2, polyadenylate-binding protein PAB1 and PRP40.</text>
</comment>
<comment type="interaction">
    <interactant intactId="EBI-20589">
        <id>P30822</id>
    </interactant>
    <interactant intactId="EBI-2073">
        <id>P21192</id>
        <label>ACE2</label>
    </interactant>
    <organismsDiffer>false</organismsDiffer>
    <experiments>3</experiments>
</comment>
<comment type="interaction">
    <interactant intactId="EBI-20589">
        <id>P30822</id>
    </interactant>
    <interactant intactId="EBI-2682139">
        <id>P61925</id>
        <label>PKIA</label>
    </interactant>
    <organismsDiffer>true</organismsDiffer>
    <experiments>17</experiments>
</comment>
<comment type="subcellular location">
    <subcellularLocation>
        <location evidence="2">Nucleus</location>
    </subcellularLocation>
    <subcellularLocation>
        <location evidence="2">Cytoplasm</location>
        <location evidence="2">Perinuclear region</location>
    </subcellularLocation>
    <text>Localized in the nucleus and at its periphery.</text>
</comment>
<comment type="miscellaneous">
    <text evidence="3">Present with 7080 molecules/cell in log phase SD medium.</text>
</comment>
<comment type="similarity">
    <text evidence="6">Belongs to the exportin family.</text>
</comment>